<keyword id="KW-0143">Chaperone</keyword>
<keyword id="KW-0963">Cytoplasm</keyword>
<keyword id="KW-0653">Protein transport</keyword>
<keyword id="KW-0811">Translocation</keyword>
<keyword id="KW-0813">Transport</keyword>
<reference key="1">
    <citation type="journal article" date="2008" name="Infect. Immun.">
        <title>Genomic comparison of virulent Rickettsia rickettsii Sheila Smith and avirulent Rickettsia rickettsii Iowa.</title>
        <authorList>
            <person name="Ellison D.W."/>
            <person name="Clark T.R."/>
            <person name="Sturdevant D.E."/>
            <person name="Virtaneva K."/>
            <person name="Porcella S.F."/>
            <person name="Hackstadt T."/>
        </authorList>
    </citation>
    <scope>NUCLEOTIDE SEQUENCE [LARGE SCALE GENOMIC DNA]</scope>
    <source>
        <strain>Iowa</strain>
    </source>
</reference>
<accession>B0BW24</accession>
<feature type="chain" id="PRO_1000083863" description="Protein-export protein SecB">
    <location>
        <begin position="1"/>
        <end position="152"/>
    </location>
</feature>
<name>SECB_RICRO</name>
<comment type="function">
    <text evidence="1">One of the proteins required for the normal export of preproteins out of the cell cytoplasm. It is a molecular chaperone that binds to a subset of precursor proteins, maintaining them in a translocation-competent state. It also specifically binds to its receptor SecA.</text>
</comment>
<comment type="subunit">
    <text evidence="1">Homotetramer, a dimer of dimers. One homotetramer interacts with 1 SecA dimer.</text>
</comment>
<comment type="subcellular location">
    <subcellularLocation>
        <location evidence="1">Cytoplasm</location>
    </subcellularLocation>
</comment>
<comment type="similarity">
    <text evidence="1">Belongs to the SecB family.</text>
</comment>
<organism>
    <name type="scientific">Rickettsia rickettsii (strain Iowa)</name>
    <dbReference type="NCBI Taxonomy" id="452659"/>
    <lineage>
        <taxon>Bacteria</taxon>
        <taxon>Pseudomonadati</taxon>
        <taxon>Pseudomonadota</taxon>
        <taxon>Alphaproteobacteria</taxon>
        <taxon>Rickettsiales</taxon>
        <taxon>Rickettsiaceae</taxon>
        <taxon>Rickettsieae</taxon>
        <taxon>Rickettsia</taxon>
        <taxon>spotted fever group</taxon>
    </lineage>
</organism>
<evidence type="ECO:0000255" key="1">
    <source>
        <dbReference type="HAMAP-Rule" id="MF_00821"/>
    </source>
</evidence>
<proteinExistence type="inferred from homology"/>
<protein>
    <recommendedName>
        <fullName evidence="1">Protein-export protein SecB</fullName>
    </recommendedName>
</protein>
<sequence>MSTINTDTNETMPHISVNAQYIKDLSLENPSAPSSLAALDQRPQIDLSLDINITNLSEESFYEVELNIEAIARNEKYKLFQVELKYAGVFNLINIDSEQHPVLLSVHCPAMIFPFARKIIASCTQDAGFQPLMIDPIDFGALYHKKMSEHQN</sequence>
<dbReference type="EMBL" id="CP000766">
    <property type="protein sequence ID" value="ABY72050.1"/>
    <property type="molecule type" value="Genomic_DNA"/>
</dbReference>
<dbReference type="RefSeq" id="WP_012150325.1">
    <property type="nucleotide sequence ID" value="NC_010263.3"/>
</dbReference>
<dbReference type="SMR" id="B0BW24"/>
<dbReference type="GeneID" id="79936899"/>
<dbReference type="KEGG" id="rrj:RrIowa_0130"/>
<dbReference type="eggNOG" id="COG1952">
    <property type="taxonomic scope" value="Bacteria"/>
</dbReference>
<dbReference type="HOGENOM" id="CLU_111574_0_0_5"/>
<dbReference type="Proteomes" id="UP000000796">
    <property type="component" value="Chromosome"/>
</dbReference>
<dbReference type="GO" id="GO:0005737">
    <property type="term" value="C:cytoplasm"/>
    <property type="evidence" value="ECO:0007669"/>
    <property type="project" value="UniProtKB-SubCell"/>
</dbReference>
<dbReference type="GO" id="GO:0051082">
    <property type="term" value="F:unfolded protein binding"/>
    <property type="evidence" value="ECO:0007669"/>
    <property type="project" value="InterPro"/>
</dbReference>
<dbReference type="GO" id="GO:0006457">
    <property type="term" value="P:protein folding"/>
    <property type="evidence" value="ECO:0007669"/>
    <property type="project" value="UniProtKB-UniRule"/>
</dbReference>
<dbReference type="GO" id="GO:0051262">
    <property type="term" value="P:protein tetramerization"/>
    <property type="evidence" value="ECO:0007669"/>
    <property type="project" value="InterPro"/>
</dbReference>
<dbReference type="GO" id="GO:0015031">
    <property type="term" value="P:protein transport"/>
    <property type="evidence" value="ECO:0007669"/>
    <property type="project" value="UniProtKB-UniRule"/>
</dbReference>
<dbReference type="CDD" id="cd00557">
    <property type="entry name" value="Translocase_SecB"/>
    <property type="match status" value="1"/>
</dbReference>
<dbReference type="Gene3D" id="3.10.420.10">
    <property type="entry name" value="SecB-like"/>
    <property type="match status" value="1"/>
</dbReference>
<dbReference type="HAMAP" id="MF_00821">
    <property type="entry name" value="SecB"/>
    <property type="match status" value="1"/>
</dbReference>
<dbReference type="InterPro" id="IPR003708">
    <property type="entry name" value="SecB"/>
</dbReference>
<dbReference type="InterPro" id="IPR035958">
    <property type="entry name" value="SecB-like_sf"/>
</dbReference>
<dbReference type="NCBIfam" id="NF004392">
    <property type="entry name" value="PRK05751.1-3"/>
    <property type="match status" value="1"/>
</dbReference>
<dbReference type="NCBIfam" id="TIGR00809">
    <property type="entry name" value="secB"/>
    <property type="match status" value="1"/>
</dbReference>
<dbReference type="PANTHER" id="PTHR36918">
    <property type="match status" value="1"/>
</dbReference>
<dbReference type="PANTHER" id="PTHR36918:SF1">
    <property type="entry name" value="PROTEIN-EXPORT PROTEIN SECB"/>
    <property type="match status" value="1"/>
</dbReference>
<dbReference type="Pfam" id="PF02556">
    <property type="entry name" value="SecB"/>
    <property type="match status" value="1"/>
</dbReference>
<dbReference type="PRINTS" id="PR01594">
    <property type="entry name" value="SECBCHAPRONE"/>
</dbReference>
<dbReference type="SUPFAM" id="SSF54611">
    <property type="entry name" value="SecB-like"/>
    <property type="match status" value="1"/>
</dbReference>
<gene>
    <name evidence="1" type="primary">secB</name>
    <name type="ordered locus">RrIowa_0130</name>
</gene>